<reference key="1">
    <citation type="submission" date="2007-05" db="EMBL/GenBank/DDBJ databases">
        <title>Complete sequence of Pseudomonas putida F1.</title>
        <authorList>
            <consortium name="US DOE Joint Genome Institute"/>
            <person name="Copeland A."/>
            <person name="Lucas S."/>
            <person name="Lapidus A."/>
            <person name="Barry K."/>
            <person name="Detter J.C."/>
            <person name="Glavina del Rio T."/>
            <person name="Hammon N."/>
            <person name="Israni S."/>
            <person name="Dalin E."/>
            <person name="Tice H."/>
            <person name="Pitluck S."/>
            <person name="Chain P."/>
            <person name="Malfatti S."/>
            <person name="Shin M."/>
            <person name="Vergez L."/>
            <person name="Schmutz J."/>
            <person name="Larimer F."/>
            <person name="Land M."/>
            <person name="Hauser L."/>
            <person name="Kyrpides N."/>
            <person name="Lykidis A."/>
            <person name="Parales R."/>
            <person name="Richardson P."/>
        </authorList>
    </citation>
    <scope>NUCLEOTIDE SEQUENCE [LARGE SCALE GENOMIC DNA]</scope>
    <source>
        <strain>ATCC 700007 / DSM 6899 / JCM 31910 / BCRC 17059 / LMG 24140 / F1</strain>
    </source>
</reference>
<evidence type="ECO:0000255" key="1">
    <source>
        <dbReference type="HAMAP-Rule" id="MF_00146"/>
    </source>
</evidence>
<comment type="function">
    <text evidence="1">Catalyzes the deamination of dCTP to dUTP.</text>
</comment>
<comment type="catalytic activity">
    <reaction evidence="1">
        <text>dCTP + H2O + H(+) = dUTP + NH4(+)</text>
        <dbReference type="Rhea" id="RHEA:22680"/>
        <dbReference type="ChEBI" id="CHEBI:15377"/>
        <dbReference type="ChEBI" id="CHEBI:15378"/>
        <dbReference type="ChEBI" id="CHEBI:28938"/>
        <dbReference type="ChEBI" id="CHEBI:61481"/>
        <dbReference type="ChEBI" id="CHEBI:61555"/>
        <dbReference type="EC" id="3.5.4.13"/>
    </reaction>
</comment>
<comment type="pathway">
    <text evidence="1">Pyrimidine metabolism; dUMP biosynthesis; dUMP from dCTP (dUTP route): step 1/2.</text>
</comment>
<comment type="subunit">
    <text evidence="1">Homotrimer.</text>
</comment>
<comment type="similarity">
    <text evidence="1">Belongs to the dCTP deaminase family.</text>
</comment>
<feature type="chain" id="PRO_1000009787" description="dCTP deaminase">
    <location>
        <begin position="1"/>
        <end position="188"/>
    </location>
</feature>
<feature type="active site" description="Proton donor/acceptor" evidence="1">
    <location>
        <position position="137"/>
    </location>
</feature>
<feature type="binding site" evidence="1">
    <location>
        <begin position="111"/>
        <end position="116"/>
    </location>
    <ligand>
        <name>dCTP</name>
        <dbReference type="ChEBI" id="CHEBI:61481"/>
    </ligand>
</feature>
<feature type="binding site" evidence="1">
    <location>
        <begin position="135"/>
        <end position="137"/>
    </location>
    <ligand>
        <name>dCTP</name>
        <dbReference type="ChEBI" id="CHEBI:61481"/>
    </ligand>
</feature>
<feature type="binding site" evidence="1">
    <location>
        <position position="156"/>
    </location>
    <ligand>
        <name>dCTP</name>
        <dbReference type="ChEBI" id="CHEBI:61481"/>
    </ligand>
</feature>
<feature type="binding site" evidence="1">
    <location>
        <position position="170"/>
    </location>
    <ligand>
        <name>dCTP</name>
        <dbReference type="ChEBI" id="CHEBI:61481"/>
    </ligand>
</feature>
<feature type="binding site" evidence="1">
    <location>
        <position position="180"/>
    </location>
    <ligand>
        <name>dCTP</name>
        <dbReference type="ChEBI" id="CHEBI:61481"/>
    </ligand>
</feature>
<protein>
    <recommendedName>
        <fullName evidence="1">dCTP deaminase</fullName>
        <ecNumber evidence="1">3.5.4.13</ecNumber>
    </recommendedName>
    <alternativeName>
        <fullName evidence="1">Deoxycytidine triphosphate deaminase</fullName>
    </alternativeName>
</protein>
<dbReference type="EC" id="3.5.4.13" evidence="1"/>
<dbReference type="EMBL" id="CP000712">
    <property type="protein sequence ID" value="ABQ77301.1"/>
    <property type="molecule type" value="Genomic_DNA"/>
</dbReference>
<dbReference type="SMR" id="A5VZJ1"/>
<dbReference type="KEGG" id="ppf:Pput_1140"/>
<dbReference type="eggNOG" id="COG0717">
    <property type="taxonomic scope" value="Bacteria"/>
</dbReference>
<dbReference type="HOGENOM" id="CLU_087476_4_0_6"/>
<dbReference type="UniPathway" id="UPA00610">
    <property type="reaction ID" value="UER00665"/>
</dbReference>
<dbReference type="GO" id="GO:0008829">
    <property type="term" value="F:dCTP deaminase activity"/>
    <property type="evidence" value="ECO:0007669"/>
    <property type="project" value="UniProtKB-UniRule"/>
</dbReference>
<dbReference type="GO" id="GO:0000166">
    <property type="term" value="F:nucleotide binding"/>
    <property type="evidence" value="ECO:0007669"/>
    <property type="project" value="UniProtKB-KW"/>
</dbReference>
<dbReference type="GO" id="GO:0006226">
    <property type="term" value="P:dUMP biosynthetic process"/>
    <property type="evidence" value="ECO:0007669"/>
    <property type="project" value="UniProtKB-UniPathway"/>
</dbReference>
<dbReference type="GO" id="GO:0006229">
    <property type="term" value="P:dUTP biosynthetic process"/>
    <property type="evidence" value="ECO:0007669"/>
    <property type="project" value="UniProtKB-UniRule"/>
</dbReference>
<dbReference type="GO" id="GO:0015949">
    <property type="term" value="P:nucleobase-containing small molecule interconversion"/>
    <property type="evidence" value="ECO:0007669"/>
    <property type="project" value="TreeGrafter"/>
</dbReference>
<dbReference type="CDD" id="cd07557">
    <property type="entry name" value="trimeric_dUTPase"/>
    <property type="match status" value="1"/>
</dbReference>
<dbReference type="FunFam" id="2.70.40.10:FF:000001">
    <property type="entry name" value="dCTP deaminase"/>
    <property type="match status" value="1"/>
</dbReference>
<dbReference type="Gene3D" id="2.70.40.10">
    <property type="match status" value="1"/>
</dbReference>
<dbReference type="HAMAP" id="MF_00146">
    <property type="entry name" value="dCTP_deaminase"/>
    <property type="match status" value="1"/>
</dbReference>
<dbReference type="InterPro" id="IPR011962">
    <property type="entry name" value="dCTP_deaminase"/>
</dbReference>
<dbReference type="InterPro" id="IPR036157">
    <property type="entry name" value="dUTPase-like_sf"/>
</dbReference>
<dbReference type="InterPro" id="IPR033704">
    <property type="entry name" value="dUTPase_trimeric"/>
</dbReference>
<dbReference type="NCBIfam" id="TIGR02274">
    <property type="entry name" value="dCTP_deam"/>
    <property type="match status" value="1"/>
</dbReference>
<dbReference type="PANTHER" id="PTHR42680">
    <property type="entry name" value="DCTP DEAMINASE"/>
    <property type="match status" value="1"/>
</dbReference>
<dbReference type="PANTHER" id="PTHR42680:SF3">
    <property type="entry name" value="DCTP DEAMINASE"/>
    <property type="match status" value="1"/>
</dbReference>
<dbReference type="Pfam" id="PF22769">
    <property type="entry name" value="DCD"/>
    <property type="match status" value="1"/>
</dbReference>
<dbReference type="SUPFAM" id="SSF51283">
    <property type="entry name" value="dUTPase-like"/>
    <property type="match status" value="1"/>
</dbReference>
<keyword id="KW-0378">Hydrolase</keyword>
<keyword id="KW-0546">Nucleotide metabolism</keyword>
<keyword id="KW-0547">Nucleotide-binding</keyword>
<name>DCD_PSEP1</name>
<accession>A5VZJ1</accession>
<sequence>MSIKSDKWIRRMAQEHGMIEPFVERQVRGEQDNRVISFGVSSYGYDVRCADEFKVFTNINSATVDPKNFDAGSFVDIKSDVCIIPPNSFALARTVEYFRIPRDVLTICLGKSTYARCGIIVNVTPLEPEWEGHVTLEFSNTTTLPAKIYANEGVAQMLFLQSDEECEVSYKDRGGKYQGQRGVTLPRT</sequence>
<proteinExistence type="inferred from homology"/>
<organism>
    <name type="scientific">Pseudomonas putida (strain ATCC 700007 / DSM 6899 / JCM 31910 / BCRC 17059 / LMG 24140 / F1)</name>
    <dbReference type="NCBI Taxonomy" id="351746"/>
    <lineage>
        <taxon>Bacteria</taxon>
        <taxon>Pseudomonadati</taxon>
        <taxon>Pseudomonadota</taxon>
        <taxon>Gammaproteobacteria</taxon>
        <taxon>Pseudomonadales</taxon>
        <taxon>Pseudomonadaceae</taxon>
        <taxon>Pseudomonas</taxon>
    </lineage>
</organism>
<gene>
    <name evidence="1" type="primary">dcd</name>
    <name type="ordered locus">Pput_1140</name>
</gene>